<evidence type="ECO:0000250" key="1"/>
<evidence type="ECO:0000250" key="2">
    <source>
        <dbReference type="UniProtKB" id="P51813"/>
    </source>
</evidence>
<evidence type="ECO:0000255" key="3">
    <source>
        <dbReference type="PROSITE-ProRule" id="PRU00145"/>
    </source>
</evidence>
<evidence type="ECO:0000255" key="4">
    <source>
        <dbReference type="PROSITE-ProRule" id="PRU00159"/>
    </source>
</evidence>
<evidence type="ECO:0000255" key="5">
    <source>
        <dbReference type="PROSITE-ProRule" id="PRU00191"/>
    </source>
</evidence>
<evidence type="ECO:0000255" key="6">
    <source>
        <dbReference type="PROSITE-ProRule" id="PRU00432"/>
    </source>
</evidence>
<evidence type="ECO:0000255" key="7">
    <source>
        <dbReference type="PROSITE-ProRule" id="PRU10028"/>
    </source>
</evidence>
<evidence type="ECO:0000269" key="8">
    <source>
    </source>
</evidence>
<evidence type="ECO:0000269" key="9">
    <source>
    </source>
</evidence>
<organism>
    <name type="scientific">Mus musculus</name>
    <name type="common">Mouse</name>
    <dbReference type="NCBI Taxonomy" id="10090"/>
    <lineage>
        <taxon>Eukaryota</taxon>
        <taxon>Metazoa</taxon>
        <taxon>Chordata</taxon>
        <taxon>Craniata</taxon>
        <taxon>Vertebrata</taxon>
        <taxon>Euteleostomi</taxon>
        <taxon>Mammalia</taxon>
        <taxon>Eutheria</taxon>
        <taxon>Euarchontoglires</taxon>
        <taxon>Glires</taxon>
        <taxon>Rodentia</taxon>
        <taxon>Myomorpha</taxon>
        <taxon>Muroidea</taxon>
        <taxon>Muridae</taxon>
        <taxon>Murinae</taxon>
        <taxon>Mus</taxon>
        <taxon>Mus</taxon>
    </lineage>
</organism>
<comment type="function">
    <text evidence="8">Non-receptor tyrosine kinase that plays central but diverse modulatory roles in various signaling processes involved in the regulation of actin reorganization, cell migration, cell proliferation and survival, cell adhesion, and apoptosis. Participates in signal transduction stimulated by growth factor receptors, cytokine receptors, G-protein coupled receptors, antigen receptors and integrins. Induces tyrosine phosphorylation of BCAR1 in response to integrin regulation. Activation of BMX by integrins is mediated by PTK2/FAK1, a key mediator of integrin signaling events leading to the regulation of actin cytoskeleton and cell motility. Plays a critical role in TNF-induced angiogenesis, and implicated in the signaling of TEK and FLT1 receptors, 2 important receptor families essential for angiogenesis. Required for the phosphorylation and activation of STAT3, a transcription factor involved in cell differentiation. Also involved in interleukin-6 (IL6) induced differentiation. Also plays a role in programming adaptive cytoprotection against extracellular stress in different cell systems, salivary epithelial cells, brain endothelial cells, and dermal fibroblasts. May be involved in regulation of endocytosis through its interaction with an endosomal protein RUFY1. May also play a role in the growth and differentiation of hematopoietic cells; as well as in signal transduction in endocardial and arterial endothelial cells.</text>
</comment>
<comment type="catalytic activity">
    <reaction evidence="7">
        <text>L-tyrosyl-[protein] + ATP = O-phospho-L-tyrosyl-[protein] + ADP + H(+)</text>
        <dbReference type="Rhea" id="RHEA:10596"/>
        <dbReference type="Rhea" id="RHEA-COMP:10136"/>
        <dbReference type="Rhea" id="RHEA-COMP:20101"/>
        <dbReference type="ChEBI" id="CHEBI:15378"/>
        <dbReference type="ChEBI" id="CHEBI:30616"/>
        <dbReference type="ChEBI" id="CHEBI:46858"/>
        <dbReference type="ChEBI" id="CHEBI:61978"/>
        <dbReference type="ChEBI" id="CHEBI:456216"/>
        <dbReference type="EC" id="2.7.10.2"/>
    </reaction>
</comment>
<comment type="cofactor">
    <cofactor evidence="1">
        <name>Zn(2+)</name>
        <dbReference type="ChEBI" id="CHEBI:29105"/>
    </cofactor>
    <text evidence="1">Binds 1 zinc ion per subunit.</text>
</comment>
<comment type="activity regulation">
    <text evidence="1">TEK and vascular endothelial growth factor receptor 1 (FLT1) stimulate BMX tyrosine kinase activity. Activated by integrins through the mediation of PTK2/FAK1 (By similarity). Activated by TNF through the mediation of TNFRSF1B (By similarity).</text>
</comment>
<comment type="subunit">
    <text evidence="1">Interacts with BCAR1, CAV1, MYD88, PTK2/FAK1, RUFY1, RUFY2, STAT3, TIRAP and TNFRSF1B.</text>
</comment>
<comment type="subcellular location">
    <subcellularLocation>
        <location evidence="1">Cytoplasm</location>
    </subcellularLocation>
    <text evidence="1">Localizes to the edges of spreading cells when complexed with BCAR1.</text>
</comment>
<comment type="tissue specificity">
    <text evidence="9">Specifically expressed in the endocardium of the developing heart as well as in the endocardium of the left ventricle and in the endothelium of large arteries in adult mice.</text>
</comment>
<comment type="domain">
    <text evidence="1">SH2 domain mediates interaction with RUFY1.</text>
</comment>
<comment type="PTM">
    <text evidence="1">Phosphorylated in response to protein I/II and to LPS. Phosphorylation at Tyr-542 by SRC and by autocatalysis leads to activation and is required for STAT3 phosphorylation by BMX.</text>
</comment>
<comment type="similarity">
    <text evidence="4">Belongs to the protein kinase superfamily. Tyr protein kinase family. TEC subfamily.</text>
</comment>
<protein>
    <recommendedName>
        <fullName>Cytoplasmic tyrosine-protein kinase BMX</fullName>
        <ecNumber>2.7.10.2</ecNumber>
    </recommendedName>
    <alternativeName>
        <fullName>Bone marrow tyrosine kinase gene in chromosome X protein homolog</fullName>
    </alternativeName>
</protein>
<sequence length="651" mass="75001">MESKSILEELLLKKSQQKKKMSPNNYKERLFVLTKTSLSYYEYDKMKRGSRKGSIEIKKIRCVEKVNLEEQTPVERQYPFQIVYKDGLLYVYASNEESRCQWLKALQKEIRGNPHLLIKYHSGFFVDGKFLCCQQSCKAAPGCTLWEAYADLHIAISDEKHRAPTFPERLLKIPRAVPVLKMDASSSGAILPQYDSYSKKSCGSQPTSNIRYIPREDCPDWWQVRKLKSEEDIACSNQLERNIASHSTSKMSWGFPESSSSEEEENLHAYDWFAGNISRSQSEQLLRQKGKEGAFMVRNSSQMGMYTVSLFSKAVNDKKGTVKHYHVHTNAENKLYLAENYCFDSIPKLIHYHQHNSAGMITRLRHPVSTKANKVPVSVALGSGIWELKREEITLLKELGNGQFGVVQLGQWKGQYDVAVKMIKEGAMSEDEFFQEAQTMMKLSHPKLVKFYGVCSKKYPIYIVTEYITNGCLLNYLKSHGKGLESCQLLEMCYDVCEGMAFLESHQFIHRDLAARNCLVDSDLSVKVSDFGMTRYVLDDQYVSSVGTKFPVKWSAPEVFHYFKYSSKSDVWAFGILMWEVFSLGKQPYDLYDNSEVVVKVSQGHRLYRPQLASDTIYQIMYSCWHELPEKRPTFQQLLSAIEPLREQDKP</sequence>
<accession>P97504</accession>
<name>BMX_MOUSE</name>
<proteinExistence type="evidence at transcript level"/>
<keyword id="KW-0053">Apoptosis</keyword>
<keyword id="KW-0067">ATP-binding</keyword>
<keyword id="KW-0130">Cell adhesion</keyword>
<keyword id="KW-0963">Cytoplasm</keyword>
<keyword id="KW-0418">Kinase</keyword>
<keyword id="KW-0479">Metal-binding</keyword>
<keyword id="KW-0547">Nucleotide-binding</keyword>
<keyword id="KW-0597">Phosphoprotein</keyword>
<keyword id="KW-1185">Reference proteome</keyword>
<keyword id="KW-0727">SH2 domain</keyword>
<keyword id="KW-0808">Transferase</keyword>
<keyword id="KW-0829">Tyrosine-protein kinase</keyword>
<keyword id="KW-0862">Zinc</keyword>
<keyword id="KW-0863">Zinc-finger</keyword>
<dbReference type="EC" id="2.7.10.2"/>
<dbReference type="EMBL" id="U88091">
    <property type="protein sequence ID" value="AAB47770.1"/>
    <property type="molecule type" value="mRNA"/>
</dbReference>
<dbReference type="EMBL" id="AF012104">
    <property type="protein sequence ID" value="AAC53370.1"/>
    <property type="molecule type" value="mRNA"/>
</dbReference>
<dbReference type="EMBL" id="AK036707">
    <property type="protein sequence ID" value="BAC29542.1"/>
    <property type="molecule type" value="mRNA"/>
</dbReference>
<dbReference type="EMBL" id="AK040936">
    <property type="protein sequence ID" value="BAC30753.1"/>
    <property type="molecule type" value="mRNA"/>
</dbReference>
<dbReference type="RefSeq" id="NP_033889.2">
    <property type="nucleotide sequence ID" value="NM_009759.4"/>
</dbReference>
<dbReference type="SMR" id="P97504"/>
<dbReference type="BioGRID" id="198374">
    <property type="interactions" value="6"/>
</dbReference>
<dbReference type="FunCoup" id="P97504">
    <property type="interactions" value="121"/>
</dbReference>
<dbReference type="IntAct" id="P97504">
    <property type="interactions" value="1"/>
</dbReference>
<dbReference type="STRING" id="10090.ENSMUSP00000107884"/>
<dbReference type="BindingDB" id="P97504"/>
<dbReference type="ChEMBL" id="CHEMBL2034793"/>
<dbReference type="GlyGen" id="P97504">
    <property type="glycosylation" value="2 sites, 2 N-linked glycans (2 sites)"/>
</dbReference>
<dbReference type="iPTMnet" id="P97504"/>
<dbReference type="PhosphoSitePlus" id="P97504"/>
<dbReference type="PaxDb" id="10090-ENSMUSP00000107884"/>
<dbReference type="ProteomicsDB" id="265448"/>
<dbReference type="Antibodypedia" id="412">
    <property type="antibodies" value="638 antibodies from 34 providers"/>
</dbReference>
<dbReference type="DNASU" id="12169"/>
<dbReference type="Ensembl" id="ENSMUST00000112263.2">
    <property type="protein sequence ID" value="ENSMUSP00000107882.2"/>
    <property type="gene ID" value="ENSMUSG00000031377.12"/>
</dbReference>
<dbReference type="GeneID" id="12169"/>
<dbReference type="KEGG" id="mmu:12169"/>
<dbReference type="AGR" id="MGI:1101778"/>
<dbReference type="CTD" id="660"/>
<dbReference type="MGI" id="MGI:1101778">
    <property type="gene designation" value="Bmx"/>
</dbReference>
<dbReference type="VEuPathDB" id="HostDB:ENSMUSG00000031377"/>
<dbReference type="eggNOG" id="KOG0197">
    <property type="taxonomic scope" value="Eukaryota"/>
</dbReference>
<dbReference type="GeneTree" id="ENSGT00940000161172"/>
<dbReference type="HOGENOM" id="CLU_000288_7_2_1"/>
<dbReference type="InParanoid" id="P97504"/>
<dbReference type="OMA" id="PDWWQIR"/>
<dbReference type="OrthoDB" id="4062651at2759"/>
<dbReference type="PhylomeDB" id="P97504"/>
<dbReference type="Reactome" id="R-MMU-111465">
    <property type="pathway name" value="Apoptotic cleavage of cellular proteins"/>
</dbReference>
<dbReference type="Reactome" id="R-MMU-1660499">
    <property type="pathway name" value="Synthesis of PIPs at the plasma membrane"/>
</dbReference>
<dbReference type="BioGRID-ORCS" id="12169">
    <property type="hits" value="1 hit in 81 CRISPR screens"/>
</dbReference>
<dbReference type="PRO" id="PR:P97504"/>
<dbReference type="Proteomes" id="UP000000589">
    <property type="component" value="Chromosome X"/>
</dbReference>
<dbReference type="RNAct" id="P97504">
    <property type="molecule type" value="protein"/>
</dbReference>
<dbReference type="Bgee" id="ENSMUSG00000031377">
    <property type="expression patterns" value="Expressed in granulocyte and 79 other cell types or tissues"/>
</dbReference>
<dbReference type="ExpressionAtlas" id="P97504">
    <property type="expression patterns" value="baseline and differential"/>
</dbReference>
<dbReference type="GO" id="GO:0005829">
    <property type="term" value="C:cytosol"/>
    <property type="evidence" value="ECO:0007669"/>
    <property type="project" value="UniProtKB-ARBA"/>
</dbReference>
<dbReference type="GO" id="GO:0005524">
    <property type="term" value="F:ATP binding"/>
    <property type="evidence" value="ECO:0007669"/>
    <property type="project" value="UniProtKB-KW"/>
</dbReference>
<dbReference type="GO" id="GO:0004715">
    <property type="term" value="F:non-membrane spanning protein tyrosine kinase activity"/>
    <property type="evidence" value="ECO:0007669"/>
    <property type="project" value="UniProtKB-EC"/>
</dbReference>
<dbReference type="GO" id="GO:0008270">
    <property type="term" value="F:zinc ion binding"/>
    <property type="evidence" value="ECO:0007669"/>
    <property type="project" value="UniProtKB-KW"/>
</dbReference>
<dbReference type="GO" id="GO:0006915">
    <property type="term" value="P:apoptotic process"/>
    <property type="evidence" value="ECO:0007669"/>
    <property type="project" value="UniProtKB-KW"/>
</dbReference>
<dbReference type="GO" id="GO:0007155">
    <property type="term" value="P:cell adhesion"/>
    <property type="evidence" value="ECO:0007669"/>
    <property type="project" value="UniProtKB-KW"/>
</dbReference>
<dbReference type="GO" id="GO:0035556">
    <property type="term" value="P:intracellular signal transduction"/>
    <property type="evidence" value="ECO:0007669"/>
    <property type="project" value="InterPro"/>
</dbReference>
<dbReference type="CDD" id="cd01238">
    <property type="entry name" value="PH_Btk"/>
    <property type="match status" value="1"/>
</dbReference>
<dbReference type="FunFam" id="1.10.510.10:FF:000052">
    <property type="entry name" value="Tyrosine-protein kinase"/>
    <property type="match status" value="1"/>
</dbReference>
<dbReference type="FunFam" id="2.30.29.30:FF:000238">
    <property type="entry name" value="Tyrosine-protein kinase"/>
    <property type="match status" value="1"/>
</dbReference>
<dbReference type="FunFam" id="3.30.200.20:FF:000053">
    <property type="entry name" value="Tyrosine-protein kinase"/>
    <property type="match status" value="1"/>
</dbReference>
<dbReference type="FunFam" id="3.30.505.10:FF:000060">
    <property type="entry name" value="Tyrosine-protein kinase"/>
    <property type="match status" value="1"/>
</dbReference>
<dbReference type="Gene3D" id="2.30.29.30">
    <property type="entry name" value="Pleckstrin-homology domain (PH domain)/Phosphotyrosine-binding domain (PTB)"/>
    <property type="match status" value="1"/>
</dbReference>
<dbReference type="Gene3D" id="3.30.505.10">
    <property type="entry name" value="SH2 domain"/>
    <property type="match status" value="1"/>
</dbReference>
<dbReference type="Gene3D" id="1.10.510.10">
    <property type="entry name" value="Transferase(Phosphotransferase) domain 1"/>
    <property type="match status" value="1"/>
</dbReference>
<dbReference type="InterPro" id="IPR011009">
    <property type="entry name" value="Kinase-like_dom_sf"/>
</dbReference>
<dbReference type="InterPro" id="IPR050198">
    <property type="entry name" value="Non-receptor_tyrosine_kinases"/>
</dbReference>
<dbReference type="InterPro" id="IPR011993">
    <property type="entry name" value="PH-like_dom_sf"/>
</dbReference>
<dbReference type="InterPro" id="IPR001849">
    <property type="entry name" value="PH_domain"/>
</dbReference>
<dbReference type="InterPro" id="IPR000719">
    <property type="entry name" value="Prot_kinase_dom"/>
</dbReference>
<dbReference type="InterPro" id="IPR017441">
    <property type="entry name" value="Protein_kinase_ATP_BS"/>
</dbReference>
<dbReference type="InterPro" id="IPR001245">
    <property type="entry name" value="Ser-Thr/Tyr_kinase_cat_dom"/>
</dbReference>
<dbReference type="InterPro" id="IPR000980">
    <property type="entry name" value="SH2"/>
</dbReference>
<dbReference type="InterPro" id="IPR036860">
    <property type="entry name" value="SH2_dom_sf"/>
</dbReference>
<dbReference type="InterPro" id="IPR008266">
    <property type="entry name" value="Tyr_kinase_AS"/>
</dbReference>
<dbReference type="InterPro" id="IPR020635">
    <property type="entry name" value="Tyr_kinase_cat_dom"/>
</dbReference>
<dbReference type="InterPro" id="IPR001562">
    <property type="entry name" value="Znf_Btk_motif"/>
</dbReference>
<dbReference type="PANTHER" id="PTHR24418">
    <property type="entry name" value="TYROSINE-PROTEIN KINASE"/>
    <property type="match status" value="1"/>
</dbReference>
<dbReference type="Pfam" id="PF00779">
    <property type="entry name" value="BTK"/>
    <property type="match status" value="1"/>
</dbReference>
<dbReference type="Pfam" id="PF00169">
    <property type="entry name" value="PH"/>
    <property type="match status" value="1"/>
</dbReference>
<dbReference type="Pfam" id="PF07714">
    <property type="entry name" value="PK_Tyr_Ser-Thr"/>
    <property type="match status" value="1"/>
</dbReference>
<dbReference type="Pfam" id="PF00017">
    <property type="entry name" value="SH2"/>
    <property type="match status" value="1"/>
</dbReference>
<dbReference type="PRINTS" id="PR00401">
    <property type="entry name" value="SH2DOMAIN"/>
</dbReference>
<dbReference type="PRINTS" id="PR00402">
    <property type="entry name" value="TECBTKDOMAIN"/>
</dbReference>
<dbReference type="PRINTS" id="PR00109">
    <property type="entry name" value="TYRKINASE"/>
</dbReference>
<dbReference type="SMART" id="SM00107">
    <property type="entry name" value="BTK"/>
    <property type="match status" value="1"/>
</dbReference>
<dbReference type="SMART" id="SM00233">
    <property type="entry name" value="PH"/>
    <property type="match status" value="1"/>
</dbReference>
<dbReference type="SMART" id="SM00252">
    <property type="entry name" value="SH2"/>
    <property type="match status" value="1"/>
</dbReference>
<dbReference type="SMART" id="SM00219">
    <property type="entry name" value="TyrKc"/>
    <property type="match status" value="1"/>
</dbReference>
<dbReference type="SUPFAM" id="SSF50729">
    <property type="entry name" value="PH domain-like"/>
    <property type="match status" value="1"/>
</dbReference>
<dbReference type="SUPFAM" id="SSF56112">
    <property type="entry name" value="Protein kinase-like (PK-like)"/>
    <property type="match status" value="1"/>
</dbReference>
<dbReference type="SUPFAM" id="SSF55550">
    <property type="entry name" value="SH2 domain"/>
    <property type="match status" value="1"/>
</dbReference>
<dbReference type="PROSITE" id="PS50003">
    <property type="entry name" value="PH_DOMAIN"/>
    <property type="match status" value="1"/>
</dbReference>
<dbReference type="PROSITE" id="PS00107">
    <property type="entry name" value="PROTEIN_KINASE_ATP"/>
    <property type="match status" value="1"/>
</dbReference>
<dbReference type="PROSITE" id="PS50011">
    <property type="entry name" value="PROTEIN_KINASE_DOM"/>
    <property type="match status" value="1"/>
</dbReference>
<dbReference type="PROSITE" id="PS00109">
    <property type="entry name" value="PROTEIN_KINASE_TYR"/>
    <property type="match status" value="1"/>
</dbReference>
<dbReference type="PROSITE" id="PS50001">
    <property type="entry name" value="SH2"/>
    <property type="match status" value="1"/>
</dbReference>
<dbReference type="PROSITE" id="PS51113">
    <property type="entry name" value="ZF_BTK"/>
    <property type="match status" value="1"/>
</dbReference>
<reference key="1">
    <citation type="submission" date="1997-02" db="EMBL/GenBank/DDBJ databases">
        <title>Predominant expression of murine Bmx in granulo-monocytic cells.</title>
        <authorList>
            <person name="Weil D."/>
            <person name="Power M.A."/>
            <person name="Catterral M."/>
            <person name="Li C.L."/>
        </authorList>
    </citation>
    <scope>NUCLEOTIDE SEQUENCE [MRNA]</scope>
    <source>
        <strain>C57BL/6J</strain>
        <tissue>Bone marrow</tissue>
    </source>
</reference>
<reference key="2">
    <citation type="journal article" date="1997" name="Circulation">
        <title>Bmx tyrosine kinase is specifically expressed in the endocardium and the endothelium of large arteries.</title>
        <authorList>
            <person name="Ekman N."/>
            <person name="Lymboussaki A."/>
            <person name="Vastrik I."/>
            <person name="Sarvas K."/>
            <person name="Kaipainen A."/>
            <person name="Alitalo K."/>
        </authorList>
    </citation>
    <scope>NUCLEOTIDE SEQUENCE [MRNA]</scope>
    <scope>TISSUE SPECIFICITY</scope>
    <source>
        <strain>129/Sv</strain>
    </source>
</reference>
<reference key="3">
    <citation type="journal article" date="2005" name="Science">
        <title>The transcriptional landscape of the mammalian genome.</title>
        <authorList>
            <person name="Carninci P."/>
            <person name="Kasukawa T."/>
            <person name="Katayama S."/>
            <person name="Gough J."/>
            <person name="Frith M.C."/>
            <person name="Maeda N."/>
            <person name="Oyama R."/>
            <person name="Ravasi T."/>
            <person name="Lenhard B."/>
            <person name="Wells C."/>
            <person name="Kodzius R."/>
            <person name="Shimokawa K."/>
            <person name="Bajic V.B."/>
            <person name="Brenner S.E."/>
            <person name="Batalov S."/>
            <person name="Forrest A.R."/>
            <person name="Zavolan M."/>
            <person name="Davis M.J."/>
            <person name="Wilming L.G."/>
            <person name="Aidinis V."/>
            <person name="Allen J.E."/>
            <person name="Ambesi-Impiombato A."/>
            <person name="Apweiler R."/>
            <person name="Aturaliya R.N."/>
            <person name="Bailey T.L."/>
            <person name="Bansal M."/>
            <person name="Baxter L."/>
            <person name="Beisel K.W."/>
            <person name="Bersano T."/>
            <person name="Bono H."/>
            <person name="Chalk A.M."/>
            <person name="Chiu K.P."/>
            <person name="Choudhary V."/>
            <person name="Christoffels A."/>
            <person name="Clutterbuck D.R."/>
            <person name="Crowe M.L."/>
            <person name="Dalla E."/>
            <person name="Dalrymple B.P."/>
            <person name="de Bono B."/>
            <person name="Della Gatta G."/>
            <person name="di Bernardo D."/>
            <person name="Down T."/>
            <person name="Engstrom P."/>
            <person name="Fagiolini M."/>
            <person name="Faulkner G."/>
            <person name="Fletcher C.F."/>
            <person name="Fukushima T."/>
            <person name="Furuno M."/>
            <person name="Futaki S."/>
            <person name="Gariboldi M."/>
            <person name="Georgii-Hemming P."/>
            <person name="Gingeras T.R."/>
            <person name="Gojobori T."/>
            <person name="Green R.E."/>
            <person name="Gustincich S."/>
            <person name="Harbers M."/>
            <person name="Hayashi Y."/>
            <person name="Hensch T.K."/>
            <person name="Hirokawa N."/>
            <person name="Hill D."/>
            <person name="Huminiecki L."/>
            <person name="Iacono M."/>
            <person name="Ikeo K."/>
            <person name="Iwama A."/>
            <person name="Ishikawa T."/>
            <person name="Jakt M."/>
            <person name="Kanapin A."/>
            <person name="Katoh M."/>
            <person name="Kawasawa Y."/>
            <person name="Kelso J."/>
            <person name="Kitamura H."/>
            <person name="Kitano H."/>
            <person name="Kollias G."/>
            <person name="Krishnan S.P."/>
            <person name="Kruger A."/>
            <person name="Kummerfeld S.K."/>
            <person name="Kurochkin I.V."/>
            <person name="Lareau L.F."/>
            <person name="Lazarevic D."/>
            <person name="Lipovich L."/>
            <person name="Liu J."/>
            <person name="Liuni S."/>
            <person name="McWilliam S."/>
            <person name="Madan Babu M."/>
            <person name="Madera M."/>
            <person name="Marchionni L."/>
            <person name="Matsuda H."/>
            <person name="Matsuzawa S."/>
            <person name="Miki H."/>
            <person name="Mignone F."/>
            <person name="Miyake S."/>
            <person name="Morris K."/>
            <person name="Mottagui-Tabar S."/>
            <person name="Mulder N."/>
            <person name="Nakano N."/>
            <person name="Nakauchi H."/>
            <person name="Ng P."/>
            <person name="Nilsson R."/>
            <person name="Nishiguchi S."/>
            <person name="Nishikawa S."/>
            <person name="Nori F."/>
            <person name="Ohara O."/>
            <person name="Okazaki Y."/>
            <person name="Orlando V."/>
            <person name="Pang K.C."/>
            <person name="Pavan W.J."/>
            <person name="Pavesi G."/>
            <person name="Pesole G."/>
            <person name="Petrovsky N."/>
            <person name="Piazza S."/>
            <person name="Reed J."/>
            <person name="Reid J.F."/>
            <person name="Ring B.Z."/>
            <person name="Ringwald M."/>
            <person name="Rost B."/>
            <person name="Ruan Y."/>
            <person name="Salzberg S.L."/>
            <person name="Sandelin A."/>
            <person name="Schneider C."/>
            <person name="Schoenbach C."/>
            <person name="Sekiguchi K."/>
            <person name="Semple C.A."/>
            <person name="Seno S."/>
            <person name="Sessa L."/>
            <person name="Sheng Y."/>
            <person name="Shibata Y."/>
            <person name="Shimada H."/>
            <person name="Shimada K."/>
            <person name="Silva D."/>
            <person name="Sinclair B."/>
            <person name="Sperling S."/>
            <person name="Stupka E."/>
            <person name="Sugiura K."/>
            <person name="Sultana R."/>
            <person name="Takenaka Y."/>
            <person name="Taki K."/>
            <person name="Tammoja K."/>
            <person name="Tan S.L."/>
            <person name="Tang S."/>
            <person name="Taylor M.S."/>
            <person name="Tegner J."/>
            <person name="Teichmann S.A."/>
            <person name="Ueda H.R."/>
            <person name="van Nimwegen E."/>
            <person name="Verardo R."/>
            <person name="Wei C.L."/>
            <person name="Yagi K."/>
            <person name="Yamanishi H."/>
            <person name="Zabarovsky E."/>
            <person name="Zhu S."/>
            <person name="Zimmer A."/>
            <person name="Hide W."/>
            <person name="Bult C."/>
            <person name="Grimmond S.M."/>
            <person name="Teasdale R.D."/>
            <person name="Liu E.T."/>
            <person name="Brusic V."/>
            <person name="Quackenbush J."/>
            <person name="Wahlestedt C."/>
            <person name="Mattick J.S."/>
            <person name="Hume D.A."/>
            <person name="Kai C."/>
            <person name="Sasaki D."/>
            <person name="Tomaru Y."/>
            <person name="Fukuda S."/>
            <person name="Kanamori-Katayama M."/>
            <person name="Suzuki M."/>
            <person name="Aoki J."/>
            <person name="Arakawa T."/>
            <person name="Iida J."/>
            <person name="Imamura K."/>
            <person name="Itoh M."/>
            <person name="Kato T."/>
            <person name="Kawaji H."/>
            <person name="Kawagashira N."/>
            <person name="Kawashima T."/>
            <person name="Kojima M."/>
            <person name="Kondo S."/>
            <person name="Konno H."/>
            <person name="Nakano K."/>
            <person name="Ninomiya N."/>
            <person name="Nishio T."/>
            <person name="Okada M."/>
            <person name="Plessy C."/>
            <person name="Shibata K."/>
            <person name="Shiraki T."/>
            <person name="Suzuki S."/>
            <person name="Tagami M."/>
            <person name="Waki K."/>
            <person name="Watahiki A."/>
            <person name="Okamura-Oho Y."/>
            <person name="Suzuki H."/>
            <person name="Kawai J."/>
            <person name="Hayashizaki Y."/>
        </authorList>
    </citation>
    <scope>NUCLEOTIDE SEQUENCE [LARGE SCALE MRNA]</scope>
    <source>
        <strain>C57BL/6J</strain>
        <tissue>Aorta</tissue>
        <tissue>Bone</tissue>
    </source>
</reference>
<reference key="4">
    <citation type="journal article" date="2001" name="Mol. Cell. Biol.">
        <title>Bmx tyrosine kinase has a redundant function downstream of angiopoietin and vascular endothelial growth factor receptors in arterial endothelium.</title>
        <authorList>
            <person name="Rajantie I."/>
            <person name="Ekman N."/>
            <person name="Iljin K."/>
            <person name="Arighi E."/>
            <person name="Gunji Y."/>
            <person name="Kaukonen J."/>
            <person name="Palotie A."/>
            <person name="Dewerchin M."/>
            <person name="Carmeliet P."/>
            <person name="Alitalo K."/>
        </authorList>
    </citation>
    <scope>ACTIVITY REGULATION</scope>
    <scope>FUNCTION</scope>
</reference>
<reference key="5">
    <citation type="journal article" date="2000" name="Oncogene">
        <title>Signaling network of the Btk family kinases.</title>
        <authorList>
            <person name="Qiu Y."/>
            <person name="Kung H.J."/>
        </authorList>
    </citation>
    <scope>REVIEW ON FUNCTION</scope>
</reference>
<reference key="6">
    <citation type="journal article" date="2001" name="Bioessays">
        <title>The Tec family of cytoplasmic tyrosine kinases: mammalian Btk, Bmx, Itk, Tec, Txk and homologs in other species.</title>
        <authorList>
            <person name="Smith C.I."/>
            <person name="Islam T.C."/>
            <person name="Mattsson P.T."/>
            <person name="Mohamed A.J."/>
            <person name="Nore B.F."/>
            <person name="Vihinen M."/>
        </authorList>
    </citation>
    <scope>REVIEW ON FUNCTION</scope>
</reference>
<reference key="7">
    <citation type="journal article" date="2007" name="Immunol. Rev.">
        <title>Tec kinases, actin, and cell adhesion.</title>
        <authorList>
            <person name="Gomez-Rodriguez J."/>
            <person name="Readinger J.A."/>
            <person name="Viorritto I.C."/>
            <person name="Mueller K.L."/>
            <person name="Houghtling R.A."/>
            <person name="Schwartzberg P.L."/>
        </authorList>
    </citation>
    <scope>REVIEW ON FUNCTION</scope>
</reference>
<gene>
    <name type="primary">Bmx</name>
</gene>
<feature type="chain" id="PRO_0000088064" description="Cytoplasmic tyrosine-protein kinase BMX">
    <location>
        <begin position="1"/>
        <end position="651"/>
    </location>
</feature>
<feature type="domain" description="PH" evidence="3">
    <location>
        <begin position="4"/>
        <end position="111"/>
    </location>
</feature>
<feature type="domain" description="SH2" evidence="5">
    <location>
        <begin position="272"/>
        <end position="368"/>
    </location>
</feature>
<feature type="domain" description="Protein kinase" evidence="4">
    <location>
        <begin position="393"/>
        <end position="646"/>
    </location>
</feature>
<feature type="zinc finger region" description="Btk-type" evidence="6">
    <location>
        <begin position="113"/>
        <end position="149"/>
    </location>
</feature>
<feature type="active site" description="Proton acceptor" evidence="4 7">
    <location>
        <position position="512"/>
    </location>
</feature>
<feature type="binding site" evidence="6">
    <location>
        <position position="121"/>
    </location>
    <ligand>
        <name>Zn(2+)</name>
        <dbReference type="ChEBI" id="CHEBI:29105"/>
    </ligand>
</feature>
<feature type="binding site" evidence="6">
    <location>
        <position position="132"/>
    </location>
    <ligand>
        <name>Zn(2+)</name>
        <dbReference type="ChEBI" id="CHEBI:29105"/>
    </ligand>
</feature>
<feature type="binding site" evidence="6">
    <location>
        <position position="133"/>
    </location>
    <ligand>
        <name>Zn(2+)</name>
        <dbReference type="ChEBI" id="CHEBI:29105"/>
    </ligand>
</feature>
<feature type="binding site" evidence="6">
    <location>
        <position position="143"/>
    </location>
    <ligand>
        <name>Zn(2+)</name>
        <dbReference type="ChEBI" id="CHEBI:29105"/>
    </ligand>
</feature>
<feature type="binding site" evidence="4">
    <location>
        <begin position="399"/>
        <end position="407"/>
    </location>
    <ligand>
        <name>ATP</name>
        <dbReference type="ChEBI" id="CHEBI:30616"/>
    </ligand>
</feature>
<feature type="binding site" evidence="4">
    <location>
        <position position="421"/>
    </location>
    <ligand>
        <name>ATP</name>
        <dbReference type="ChEBI" id="CHEBI:30616"/>
    </ligand>
</feature>
<feature type="modified residue" description="Phosphotyrosine; by SRC and autocatalysis" evidence="2">
    <location>
        <position position="542"/>
    </location>
</feature>